<comment type="catalytic activity">
    <reaction evidence="1">
        <text>D-arabinose 5-phosphate + phosphoenolpyruvate + H2O = 3-deoxy-alpha-D-manno-2-octulosonate-8-phosphate + phosphate</text>
        <dbReference type="Rhea" id="RHEA:14053"/>
        <dbReference type="ChEBI" id="CHEBI:15377"/>
        <dbReference type="ChEBI" id="CHEBI:43474"/>
        <dbReference type="ChEBI" id="CHEBI:57693"/>
        <dbReference type="ChEBI" id="CHEBI:58702"/>
        <dbReference type="ChEBI" id="CHEBI:85985"/>
        <dbReference type="EC" id="2.5.1.55"/>
    </reaction>
</comment>
<comment type="pathway">
    <text evidence="1">Carbohydrate biosynthesis; 3-deoxy-D-manno-octulosonate biosynthesis; 3-deoxy-D-manno-octulosonate from D-ribulose 5-phosphate: step 2/3.</text>
</comment>
<comment type="pathway">
    <text evidence="1">Bacterial outer membrane biogenesis; lipopolysaccharide biosynthesis.</text>
</comment>
<comment type="subcellular location">
    <subcellularLocation>
        <location evidence="1">Cytoplasm</location>
    </subcellularLocation>
</comment>
<comment type="similarity">
    <text evidence="1">Belongs to the KdsA family.</text>
</comment>
<sequence>MVTANSTVKVGNVTFSNSAPLALIAGPCQMETRDHAFEMAGRLKEMTDKLGIGLVYKSSFDKANRTSLKAARGIGLEKALEVFSDLKKEYGFPVLTDIHTEEQCAAVAPVVDVLQIPAFLCRQTDLLIAAARTGRVVNVKKGQFLAPWDMKNVLAKITESGNPNVLATERGVSFGYNTLVSDMRALPIMAGLGAPVIFDATHSVQQPGGQGGSTGGQREFVETLARAAVAVGVAGFFIETHEDPDNAPSDGPNMVPIDKMPALLEKLMAFDRIAKAL</sequence>
<accession>Q2YPU9</accession>
<dbReference type="EC" id="2.5.1.55" evidence="1"/>
<dbReference type="EMBL" id="AM040264">
    <property type="protein sequence ID" value="CAJ11112.1"/>
    <property type="molecule type" value="Genomic_DNA"/>
</dbReference>
<dbReference type="RefSeq" id="WP_002966843.1">
    <property type="nucleotide sequence ID" value="NZ_KN046823.1"/>
</dbReference>
<dbReference type="SMR" id="Q2YPU9"/>
<dbReference type="STRING" id="359391.BAB1_1156"/>
<dbReference type="GeneID" id="93016530"/>
<dbReference type="KEGG" id="bmf:BAB1_1156"/>
<dbReference type="PATRIC" id="fig|359391.11.peg.55"/>
<dbReference type="HOGENOM" id="CLU_036666_0_0_5"/>
<dbReference type="PhylomeDB" id="Q2YPU9"/>
<dbReference type="UniPathway" id="UPA00030"/>
<dbReference type="UniPathway" id="UPA00357">
    <property type="reaction ID" value="UER00474"/>
</dbReference>
<dbReference type="Proteomes" id="UP000002719">
    <property type="component" value="Chromosome I"/>
</dbReference>
<dbReference type="GO" id="GO:0005737">
    <property type="term" value="C:cytoplasm"/>
    <property type="evidence" value="ECO:0007669"/>
    <property type="project" value="UniProtKB-SubCell"/>
</dbReference>
<dbReference type="GO" id="GO:0008676">
    <property type="term" value="F:3-deoxy-8-phosphooctulonate synthase activity"/>
    <property type="evidence" value="ECO:0007669"/>
    <property type="project" value="UniProtKB-UniRule"/>
</dbReference>
<dbReference type="GO" id="GO:0019294">
    <property type="term" value="P:keto-3-deoxy-D-manno-octulosonic acid biosynthetic process"/>
    <property type="evidence" value="ECO:0007669"/>
    <property type="project" value="UniProtKB-UniRule"/>
</dbReference>
<dbReference type="Gene3D" id="3.20.20.70">
    <property type="entry name" value="Aldolase class I"/>
    <property type="match status" value="1"/>
</dbReference>
<dbReference type="HAMAP" id="MF_00056">
    <property type="entry name" value="KDO8P_synth"/>
    <property type="match status" value="1"/>
</dbReference>
<dbReference type="InterPro" id="IPR013785">
    <property type="entry name" value="Aldolase_TIM"/>
</dbReference>
<dbReference type="InterPro" id="IPR006218">
    <property type="entry name" value="DAHP1/KDSA"/>
</dbReference>
<dbReference type="InterPro" id="IPR006269">
    <property type="entry name" value="KDO8P_synthase"/>
</dbReference>
<dbReference type="NCBIfam" id="TIGR01362">
    <property type="entry name" value="KDO8P_synth"/>
    <property type="match status" value="1"/>
</dbReference>
<dbReference type="NCBIfam" id="NF003543">
    <property type="entry name" value="PRK05198.1"/>
    <property type="match status" value="1"/>
</dbReference>
<dbReference type="PANTHER" id="PTHR21057">
    <property type="entry name" value="PHOSPHO-2-DEHYDRO-3-DEOXYHEPTONATE ALDOLASE"/>
    <property type="match status" value="1"/>
</dbReference>
<dbReference type="Pfam" id="PF00793">
    <property type="entry name" value="DAHP_synth_1"/>
    <property type="match status" value="1"/>
</dbReference>
<dbReference type="SUPFAM" id="SSF51569">
    <property type="entry name" value="Aldolase"/>
    <property type="match status" value="1"/>
</dbReference>
<evidence type="ECO:0000255" key="1">
    <source>
        <dbReference type="HAMAP-Rule" id="MF_00056"/>
    </source>
</evidence>
<name>KDSA_BRUA2</name>
<proteinExistence type="inferred from homology"/>
<feature type="chain" id="PRO_0000304436" description="2-dehydro-3-deoxyphosphooctonate aldolase">
    <location>
        <begin position="1"/>
        <end position="277"/>
    </location>
</feature>
<protein>
    <recommendedName>
        <fullName evidence="1">2-dehydro-3-deoxyphosphooctonate aldolase</fullName>
        <ecNumber evidence="1">2.5.1.55</ecNumber>
    </recommendedName>
    <alternativeName>
        <fullName evidence="1">3-deoxy-D-manno-octulosonic acid 8-phosphate synthase</fullName>
    </alternativeName>
    <alternativeName>
        <fullName evidence="1">KDO-8-phosphate synthase</fullName>
        <shortName evidence="1">KDO 8-P synthase</shortName>
        <shortName evidence="1">KDOPS</shortName>
    </alternativeName>
    <alternativeName>
        <fullName evidence="1">Phospho-2-dehydro-3-deoxyoctonate aldolase</fullName>
    </alternativeName>
</protein>
<gene>
    <name evidence="1" type="primary">kdsA</name>
    <name type="ordered locus">BAB1_1156</name>
</gene>
<organism>
    <name type="scientific">Brucella abortus (strain 2308)</name>
    <dbReference type="NCBI Taxonomy" id="359391"/>
    <lineage>
        <taxon>Bacteria</taxon>
        <taxon>Pseudomonadati</taxon>
        <taxon>Pseudomonadota</taxon>
        <taxon>Alphaproteobacteria</taxon>
        <taxon>Hyphomicrobiales</taxon>
        <taxon>Brucellaceae</taxon>
        <taxon>Brucella/Ochrobactrum group</taxon>
        <taxon>Brucella</taxon>
    </lineage>
</organism>
<reference key="1">
    <citation type="journal article" date="2005" name="Infect. Immun.">
        <title>Whole-genome analyses of speciation events in pathogenic Brucellae.</title>
        <authorList>
            <person name="Chain P.S."/>
            <person name="Comerci D.J."/>
            <person name="Tolmasky M.E."/>
            <person name="Larimer F.W."/>
            <person name="Malfatti S.A."/>
            <person name="Vergez L.M."/>
            <person name="Aguero F."/>
            <person name="Land M.L."/>
            <person name="Ugalde R.A."/>
            <person name="Garcia E."/>
        </authorList>
    </citation>
    <scope>NUCLEOTIDE SEQUENCE [LARGE SCALE GENOMIC DNA]</scope>
    <source>
        <strain>2308</strain>
    </source>
</reference>
<keyword id="KW-0963">Cytoplasm</keyword>
<keyword id="KW-0448">Lipopolysaccharide biosynthesis</keyword>
<keyword id="KW-1185">Reference proteome</keyword>
<keyword id="KW-0808">Transferase</keyword>